<comment type="function">
    <text evidence="1 3 6 8">The PR65 subunit of protein phosphatase 2A serves as a scaffolding molecule to coordinate the assembly of the catalytic subunit and a variable regulatory B subunit (PubMed:10100624, PubMed:26974206). Upon interaction with GNA12 promotes dephosphorylation of microtubule associated protein TAU/MAPT (By similarity). Required for proper chromosome segregation and for centromeric localization of SGO1 in mitosis (By similarity). Together with RACK1 adapter, mediates dephosphorylation of AKT1 at 'Ser-473', preventing AKT1 activation and AKT-mTOR signaling pathway (PubMed:26974206, PubMed:33505023). Dephosphorylation of AKT1 is essential for regulatory T-cells (Treg) homeostasis and stability (PubMed:33505023). Part of the striatin-interacting phosphatase and kinase (STRIPAK) complexes. STRIPAK complexes have critical roles in protein (de)phosphorylation and are regulators of multiple signaling pathways including Hippo, MAPK, nuclear receptor and cytoskeleton remodeling. Different types of STRIPAK complexes are involved in a variety of biological processes such as cell growth, differentiation, apoptosis, metabolism and immune regulation (By similarity). Key mediator of a quality checkpoint during transcription elongation as part of the Integrator-PP2A (INTAC) complex (By similarity). The INTAC complex drives premature transcription termination of transcripts that are unfavorably configured for transcriptional elongation: within the INTAC complex, acts as a scaffolding subunit for PPP2CA, which catalyzes dephosphorylation of the C-terminal domain (CTD) of Pol II subunit POLR2A/RPB1 and SUPT5H/SPT5, thereby preventing transcriptional elongation (By similarity). Regulates the recruitment of the SKA complex to kinetochores (By similarity).</text>
</comment>
<comment type="subunit">
    <text evidence="1 2 4 5 7">PP2A consists of a common heterodimeric core enzyme, composed of PPP2CA a 36 kDa catalytic subunit (subunit C) and PPP2R1A a 65 kDa constant regulatory subunit (PR65 or subunit A), that associates with a variety of regulatory subunits (By similarity). Proteins that associate with the core dimer include three families of regulatory subunits B (the R2/B/PR55/B55, R3/B''/PR72/PR130/PR59 and R5/B'/B56 families), the 48 kDa variable regulatory subunit, viral proteins, and cell signaling molecules (By similarity). Found in a complex with at least ARL2, PPP2CB, PPP2R1A, PPP2R2A, PPP2R5E and TBCD (By similarity). Interacts with the PP2A C catalytic subunit PPP2CA (By similarity). Interacts with the PP2A B subunit PPP2R2A (By similarity). Interacts with the PP2A B subunit PPP2R5D (By similarity). Interacts with FOXO1; the interaction dephosphorylates FOXO1 on AKT-mediated phosphorylation sites (PubMed:22417654). Interacts with IPO9 (By similarity). Interacts with TP53 and SGO1 (By similarity). Interacts with PLA2G16; this interaction might decrease PP2A activity (By similarity). Interacts with CTTNBP2NL (By similarity). Interacts with GNA12; the interaction promotes protein phosphatase 2A activation causing dephosphorylation of MAPT (By similarity). Interacts with CIP2A; this interaction stabilizes CIP2A (By similarity). Interacts with PABIR1/FAM122A (By similarity). Interacts with ADCY8; antagonizes interaction between ADCY8 and calmodulin (PubMed:16258073). Interacts with CRTC3 (when phosphorylated at 'Ser-391') (PubMed:30611118). Interacts with SPRY2 (By similarity). Part of the core of STRIPAK complexes composed of PP2A catalytic and scaffolding subunits, the striatins (PP2A regulatory subunits), the striatin-associated proteins MOB4, STRIP1 and STRIP2, PDCD10 and members of the STE20 kinases, such as STK24 and STK26 (By similarity). Component of the Integrator-PP2A (INTAC) complex, composed of the Integrator core complex and protein phosphatase 2A subunits PPP2CA and PPP2R1A (By similarity).</text>
</comment>
<comment type="interaction">
    <interactant intactId="EBI-400413">
        <id>Q76MZ3</id>
    </interactant>
    <interactant intactId="EBI-397144">
        <id>P63330</id>
        <label>Ppp2ca</label>
    </interactant>
    <organismsDiffer>false</organismsDiffer>
    <experiments>3</experiments>
</comment>
<comment type="interaction">
    <interactant intactId="EBI-400413">
        <id>Q76MZ3</id>
    </interactant>
    <interactant intactId="EBI-15646000">
        <id>O56327</id>
    </interactant>
    <organismsDiffer>true</organismsDiffer>
    <experiments>2</experiments>
</comment>
<comment type="subcellular location">
    <subcellularLocation>
        <location evidence="2">Cytoplasm</location>
    </subcellularLocation>
    <subcellularLocation>
        <location evidence="1">Nucleus</location>
    </subcellularLocation>
    <subcellularLocation>
        <location evidence="1">Chromosome</location>
    </subcellularLocation>
    <subcellularLocation>
        <location evidence="1">Chromosome</location>
        <location evidence="1">Centromere</location>
    </subcellularLocation>
    <subcellularLocation>
        <location evidence="1">Lateral cell membrane</location>
    </subcellularLocation>
    <subcellularLocation>
        <location evidence="1">Cell projection</location>
        <location evidence="1">Dendrite</location>
    </subcellularLocation>
    <text evidence="1">Centromeric localization requires the presence of BUB1. Recruited to chromatin and transcription pause-release checkpoint via its association with the Integrator complex.</text>
</comment>
<comment type="domain">
    <text>Each HEAT repeat appears to consist of two alpha helices joined by a hydrophilic region, the intrarepeat loop. The repeat units may be arranged laterally to form a rod-like structure.</text>
</comment>
<comment type="similarity">
    <text evidence="9">Belongs to the phosphatase 2A regulatory subunit A family.</text>
</comment>
<keyword id="KW-0002">3D-structure</keyword>
<keyword id="KW-0007">Acetylation</keyword>
<keyword id="KW-1003">Cell membrane</keyword>
<keyword id="KW-0966">Cell projection</keyword>
<keyword id="KW-0137">Centromere</keyword>
<keyword id="KW-0158">Chromosome</keyword>
<keyword id="KW-0159">Chromosome partition</keyword>
<keyword id="KW-0963">Cytoplasm</keyword>
<keyword id="KW-0472">Membrane</keyword>
<keyword id="KW-0539">Nucleus</keyword>
<keyword id="KW-1185">Reference proteome</keyword>
<keyword id="KW-0677">Repeat</keyword>
<accession>Q76MZ3</accession>
<proteinExistence type="evidence at protein level"/>
<organism>
    <name type="scientific">Mus musculus</name>
    <name type="common">Mouse</name>
    <dbReference type="NCBI Taxonomy" id="10090"/>
    <lineage>
        <taxon>Eukaryota</taxon>
        <taxon>Metazoa</taxon>
        <taxon>Chordata</taxon>
        <taxon>Craniata</taxon>
        <taxon>Vertebrata</taxon>
        <taxon>Euteleostomi</taxon>
        <taxon>Mammalia</taxon>
        <taxon>Eutheria</taxon>
        <taxon>Euarchontoglires</taxon>
        <taxon>Glires</taxon>
        <taxon>Rodentia</taxon>
        <taxon>Myomorpha</taxon>
        <taxon>Muroidea</taxon>
        <taxon>Muridae</taxon>
        <taxon>Murinae</taxon>
        <taxon>Mus</taxon>
        <taxon>Mus</taxon>
    </lineage>
</organism>
<feature type="initiator methionine" description="Removed" evidence="1">
    <location>
        <position position="1"/>
    </location>
</feature>
<feature type="chain" id="PRO_0000071401" description="Serine/threonine-protein phosphatase 2A 65 kDa regulatory subunit A alpha isoform">
    <location>
        <begin position="2"/>
        <end position="589"/>
    </location>
</feature>
<feature type="repeat" description="HEAT 1" evidence="1">
    <location>
        <begin position="8"/>
        <end position="46"/>
    </location>
</feature>
<feature type="repeat" description="HEAT 2" evidence="1">
    <location>
        <begin position="47"/>
        <end position="84"/>
    </location>
</feature>
<feature type="repeat" description="HEAT 3" evidence="1">
    <location>
        <begin position="85"/>
        <end position="123"/>
    </location>
</feature>
<feature type="repeat" description="HEAT 4" evidence="1">
    <location>
        <begin position="124"/>
        <end position="161"/>
    </location>
</feature>
<feature type="repeat" description="HEAT 5" evidence="1">
    <location>
        <begin position="162"/>
        <end position="200"/>
    </location>
</feature>
<feature type="repeat" description="HEAT 6" evidence="1">
    <location>
        <begin position="201"/>
        <end position="239"/>
    </location>
</feature>
<feature type="repeat" description="HEAT 7" evidence="1">
    <location>
        <begin position="240"/>
        <end position="278"/>
    </location>
</feature>
<feature type="repeat" description="HEAT 8" evidence="1">
    <location>
        <begin position="279"/>
        <end position="321"/>
    </location>
</feature>
<feature type="repeat" description="HEAT 9" evidence="1">
    <location>
        <begin position="322"/>
        <end position="360"/>
    </location>
</feature>
<feature type="repeat" description="HEAT 10" evidence="1">
    <location>
        <begin position="361"/>
        <end position="399"/>
    </location>
</feature>
<feature type="repeat" description="HEAT 11" evidence="1">
    <location>
        <begin position="400"/>
        <end position="438"/>
    </location>
</feature>
<feature type="repeat" description="HEAT 12" evidence="1">
    <location>
        <begin position="439"/>
        <end position="477"/>
    </location>
</feature>
<feature type="repeat" description="HEAT 13" evidence="1">
    <location>
        <begin position="478"/>
        <end position="516"/>
    </location>
</feature>
<feature type="repeat" description="HEAT 14" evidence="1">
    <location>
        <begin position="517"/>
        <end position="555"/>
    </location>
</feature>
<feature type="repeat" description="HEAT 15" evidence="1">
    <location>
        <begin position="556"/>
        <end position="589"/>
    </location>
</feature>
<feature type="modified residue" description="N-acetylalanine" evidence="1">
    <location>
        <position position="2"/>
    </location>
</feature>
<feature type="modified residue" description="N6-acetyllysine" evidence="10">
    <location>
        <position position="280"/>
    </location>
</feature>
<feature type="helix" evidence="12">
    <location>
        <begin position="11"/>
        <end position="21"/>
    </location>
</feature>
<feature type="helix" evidence="12">
    <location>
        <begin position="25"/>
        <end position="33"/>
    </location>
</feature>
<feature type="helix" evidence="12">
    <location>
        <begin position="35"/>
        <end position="41"/>
    </location>
</feature>
<feature type="helix" evidence="12">
    <location>
        <begin position="44"/>
        <end position="49"/>
    </location>
</feature>
<feature type="helix" evidence="12">
    <location>
        <begin position="51"/>
        <end position="56"/>
    </location>
</feature>
<feature type="helix" evidence="12">
    <location>
        <begin position="63"/>
        <end position="73"/>
    </location>
</feature>
<feature type="turn" evidence="12">
    <location>
        <begin position="77"/>
        <end position="81"/>
    </location>
</feature>
<feature type="helix" evidence="11">
    <location>
        <begin position="83"/>
        <end position="85"/>
    </location>
</feature>
<feature type="helix" evidence="12">
    <location>
        <begin position="86"/>
        <end position="89"/>
    </location>
</feature>
<feature type="helix" evidence="12">
    <location>
        <begin position="90"/>
        <end position="98"/>
    </location>
</feature>
<feature type="helix" evidence="12">
    <location>
        <begin position="102"/>
        <end position="116"/>
    </location>
</feature>
<feature type="helix" evidence="12">
    <location>
        <begin position="121"/>
        <end position="126"/>
    </location>
</feature>
<feature type="helix" evidence="12">
    <location>
        <begin position="128"/>
        <end position="136"/>
    </location>
</feature>
<feature type="helix" evidence="12">
    <location>
        <begin position="141"/>
        <end position="147"/>
    </location>
</feature>
<feature type="turn" evidence="12">
    <location>
        <begin position="148"/>
        <end position="150"/>
    </location>
</feature>
<feature type="helix" evidence="12">
    <location>
        <begin position="151"/>
        <end position="154"/>
    </location>
</feature>
<feature type="helix" evidence="12">
    <location>
        <begin position="155"/>
        <end position="157"/>
    </location>
</feature>
<feature type="helix" evidence="12">
    <location>
        <begin position="160"/>
        <end position="174"/>
    </location>
</feature>
<feature type="helix" evidence="12">
    <location>
        <begin position="179"/>
        <end position="187"/>
    </location>
</feature>
<feature type="helix" evidence="12">
    <location>
        <begin position="189"/>
        <end position="193"/>
    </location>
</feature>
<feature type="helix" evidence="12">
    <location>
        <begin position="198"/>
        <end position="213"/>
    </location>
</feature>
<feature type="helix" evidence="12">
    <location>
        <begin position="218"/>
        <end position="232"/>
    </location>
</feature>
<feature type="helix" evidence="12">
    <location>
        <begin position="237"/>
        <end position="242"/>
    </location>
</feature>
<feature type="helix" evidence="12">
    <location>
        <begin position="244"/>
        <end position="251"/>
    </location>
</feature>
<feature type="helix" evidence="12">
    <location>
        <begin position="257"/>
        <end position="265"/>
    </location>
</feature>
<feature type="helix" evidence="12">
    <location>
        <begin position="267"/>
        <end position="274"/>
    </location>
</feature>
<feature type="helix" evidence="12">
    <location>
        <begin position="276"/>
        <end position="291"/>
    </location>
</feature>
<feature type="helix" evidence="12">
    <location>
        <begin position="296"/>
        <end position="303"/>
    </location>
</feature>
<feature type="helix" evidence="12">
    <location>
        <begin position="306"/>
        <end position="311"/>
    </location>
</feature>
<feature type="turn" evidence="12">
    <location>
        <begin position="315"/>
        <end position="317"/>
    </location>
</feature>
<feature type="helix" evidence="12">
    <location>
        <begin position="318"/>
        <end position="324"/>
    </location>
</feature>
<feature type="helix" evidence="12">
    <location>
        <begin position="327"/>
        <end position="334"/>
    </location>
</feature>
<feature type="helix" evidence="12">
    <location>
        <begin position="339"/>
        <end position="346"/>
    </location>
</feature>
<feature type="helix" evidence="12">
    <location>
        <begin position="349"/>
        <end position="352"/>
    </location>
</feature>
<feature type="helix" evidence="12">
    <location>
        <begin position="353"/>
        <end position="373"/>
    </location>
</feature>
<feature type="helix" evidence="12">
    <location>
        <begin position="378"/>
        <end position="385"/>
    </location>
</feature>
<feature type="helix" evidence="11">
    <location>
        <begin position="386"/>
        <end position="388"/>
    </location>
</feature>
<feature type="helix" evidence="12">
    <location>
        <begin position="389"/>
        <end position="394"/>
    </location>
</feature>
<feature type="helix" evidence="12">
    <location>
        <begin position="397"/>
        <end position="403"/>
    </location>
</feature>
<feature type="helix" evidence="12">
    <location>
        <begin position="405"/>
        <end position="411"/>
    </location>
</feature>
<feature type="helix" evidence="12">
    <location>
        <begin position="417"/>
        <end position="424"/>
    </location>
</feature>
<feature type="helix" evidence="12">
    <location>
        <begin position="427"/>
        <end position="434"/>
    </location>
</feature>
<feature type="helix" evidence="12">
    <location>
        <begin position="436"/>
        <end position="442"/>
    </location>
</feature>
<feature type="helix" evidence="12">
    <location>
        <begin position="444"/>
        <end position="451"/>
    </location>
</feature>
<feature type="helix" evidence="12">
    <location>
        <begin position="456"/>
        <end position="473"/>
    </location>
</feature>
<feature type="helix" evidence="12">
    <location>
        <begin position="475"/>
        <end position="481"/>
    </location>
</feature>
<feature type="helix" evidence="12">
    <location>
        <begin position="483"/>
        <end position="488"/>
    </location>
</feature>
<feature type="helix" evidence="12">
    <location>
        <begin position="489"/>
        <end position="491"/>
    </location>
</feature>
<feature type="helix" evidence="12">
    <location>
        <begin position="495"/>
        <end position="520"/>
    </location>
</feature>
<feature type="helix" evidence="12">
    <location>
        <begin position="522"/>
        <end position="528"/>
    </location>
</feature>
<feature type="helix" evidence="12">
    <location>
        <begin position="534"/>
        <end position="547"/>
    </location>
</feature>
<feature type="helix" evidence="12">
    <location>
        <begin position="548"/>
        <end position="550"/>
    </location>
</feature>
<feature type="helix" evidence="12">
    <location>
        <begin position="553"/>
        <end position="558"/>
    </location>
</feature>
<feature type="helix" evidence="12">
    <location>
        <begin position="560"/>
        <end position="568"/>
    </location>
</feature>
<feature type="strand" evidence="11">
    <location>
        <begin position="569"/>
        <end position="571"/>
    </location>
</feature>
<feature type="helix" evidence="12">
    <location>
        <begin position="573"/>
        <end position="585"/>
    </location>
</feature>
<sequence length="589" mass="65323">MAAADGDDSLYPIAVLIDELRNEDVQLRLNSIKKLSTIALALGVERTRSELLPFLTDTIYDEDEVLLALAEQLGTFTTLVGGPEYVHCLLPPLESLATVEETVVRDKAVESLRAISHEHSPSDLEAHFVPLVKRLAGGDWFTSRTSACGLFSVCYPRVSSAVKAELRQYFRNLCSDDTPMVRRAAASKLGEFAKVLELDNVKSEIIPMFSNLASDEQDSVRLLAVEACVNIAQLLPQEDLEALVMPTLRQAAEDKSWRVRYMVADKFTELQKAVGPEITKTDLVPAFQNLMKDCEAEVRAAASHKVKEFCENLSADCRENVIMTQILPCIKELVSDANQHVKSALASVIMGLSPILGKDNTIEHLLPLFLAQLKDECPEVRLNIISNLDCVNEVIGIRQLSQSLLPAIVELAEDAKWRVRLAIIEYMPLLAGQLGVEFFDEKLNSLCMAWLVDHVYAIREAATSNLKKLVEKFGKEWAHATIIPKVLAMSGDPNYLHRMTTLFCINVLSEVCGQDITTKHMLPTVLRMAGDPVANVRFNVAKSLQKIGPILDNSTLQSEVKPILEKLTQDQDVDVKYFAQEALTVLSLA</sequence>
<evidence type="ECO:0000250" key="1">
    <source>
        <dbReference type="UniProtKB" id="P30153"/>
    </source>
</evidence>
<evidence type="ECO:0000250" key="2">
    <source>
        <dbReference type="UniProtKB" id="Q32PI5"/>
    </source>
</evidence>
<evidence type="ECO:0000269" key="3">
    <source>
    </source>
</evidence>
<evidence type="ECO:0000269" key="4">
    <source>
    </source>
</evidence>
<evidence type="ECO:0000269" key="5">
    <source>
    </source>
</evidence>
<evidence type="ECO:0000269" key="6">
    <source>
    </source>
</evidence>
<evidence type="ECO:0000269" key="7">
    <source>
    </source>
</evidence>
<evidence type="ECO:0000269" key="8">
    <source>
    </source>
</evidence>
<evidence type="ECO:0000305" key="9"/>
<evidence type="ECO:0007744" key="10">
    <source>
    </source>
</evidence>
<evidence type="ECO:0007829" key="11">
    <source>
        <dbReference type="PDB" id="2IAE"/>
    </source>
</evidence>
<evidence type="ECO:0007829" key="12">
    <source>
        <dbReference type="PDB" id="3FGA"/>
    </source>
</evidence>
<gene>
    <name type="primary">Ppp2r1a</name>
</gene>
<dbReference type="EMBL" id="AB021743">
    <property type="protein sequence ID" value="BAA75478.1"/>
    <property type="molecule type" value="mRNA"/>
</dbReference>
<dbReference type="EMBL" id="AK054239">
    <property type="protein sequence ID" value="BAC35700.1"/>
    <property type="molecule type" value="mRNA"/>
</dbReference>
<dbReference type="EMBL" id="AK078135">
    <property type="protein sequence ID" value="BAC37143.1"/>
    <property type="molecule type" value="mRNA"/>
</dbReference>
<dbReference type="EMBL" id="BC006606">
    <property type="protein sequence ID" value="AAH06606.1"/>
    <property type="molecule type" value="mRNA"/>
</dbReference>
<dbReference type="CCDS" id="CCDS28432.1"/>
<dbReference type="RefSeq" id="NP_058587.1">
    <property type="nucleotide sequence ID" value="NM_016891.3"/>
</dbReference>
<dbReference type="PDB" id="2IAE">
    <property type="method" value="X-ray"/>
    <property type="resolution" value="3.50 A"/>
    <property type="chains" value="A/D=1-589"/>
</dbReference>
<dbReference type="PDB" id="2PF4">
    <property type="method" value="X-ray"/>
    <property type="resolution" value="3.10 A"/>
    <property type="chains" value="A/B/C/D=1-589"/>
</dbReference>
<dbReference type="PDB" id="3FGA">
    <property type="method" value="X-ray"/>
    <property type="resolution" value="2.70 A"/>
    <property type="chains" value="A=2-589"/>
</dbReference>
<dbReference type="PDB" id="6EF4">
    <property type="method" value="X-ray"/>
    <property type="resolution" value="3.40 A"/>
    <property type="chains" value="A=1-589"/>
</dbReference>
<dbReference type="PDBsum" id="2IAE"/>
<dbReference type="PDBsum" id="2PF4"/>
<dbReference type="PDBsum" id="3FGA"/>
<dbReference type="PDBsum" id="6EF4"/>
<dbReference type="SMR" id="Q76MZ3"/>
<dbReference type="BioGRID" id="206176">
    <property type="interactions" value="160"/>
</dbReference>
<dbReference type="CORUM" id="Q76MZ3"/>
<dbReference type="DIP" id="DIP-29429N"/>
<dbReference type="FunCoup" id="Q76MZ3">
    <property type="interactions" value="2902"/>
</dbReference>
<dbReference type="IntAct" id="Q76MZ3">
    <property type="interactions" value="143"/>
</dbReference>
<dbReference type="MINT" id="Q76MZ3"/>
<dbReference type="STRING" id="10090.ENSMUSP00000007708"/>
<dbReference type="BindingDB" id="Q76MZ3"/>
<dbReference type="ChEMBL" id="CHEMBL3557"/>
<dbReference type="GlyGen" id="Q76MZ3">
    <property type="glycosylation" value="1 site, 1 O-linked glycan (1 site)"/>
</dbReference>
<dbReference type="iPTMnet" id="Q76MZ3"/>
<dbReference type="PhosphoSitePlus" id="Q76MZ3"/>
<dbReference type="SwissPalm" id="Q76MZ3"/>
<dbReference type="REPRODUCTION-2DPAGE" id="Q76MZ3"/>
<dbReference type="jPOST" id="Q76MZ3"/>
<dbReference type="PaxDb" id="10090-ENSMUSP00000007708"/>
<dbReference type="PeptideAtlas" id="Q76MZ3"/>
<dbReference type="ProteomicsDB" id="285889"/>
<dbReference type="Pumba" id="Q76MZ3"/>
<dbReference type="Antibodypedia" id="4348">
    <property type="antibodies" value="390 antibodies from 42 providers"/>
</dbReference>
<dbReference type="DNASU" id="51792"/>
<dbReference type="Ensembl" id="ENSMUST00000007708.14">
    <property type="protein sequence ID" value="ENSMUSP00000007708.8"/>
    <property type="gene ID" value="ENSMUSG00000007564.16"/>
</dbReference>
<dbReference type="GeneID" id="51792"/>
<dbReference type="KEGG" id="mmu:51792"/>
<dbReference type="UCSC" id="uc008aqi.1">
    <property type="organism name" value="mouse"/>
</dbReference>
<dbReference type="AGR" id="MGI:1926334"/>
<dbReference type="CTD" id="5518"/>
<dbReference type="MGI" id="MGI:1926334">
    <property type="gene designation" value="Ppp2r1a"/>
</dbReference>
<dbReference type="VEuPathDB" id="HostDB:ENSMUSG00000007564"/>
<dbReference type="eggNOG" id="KOG0211">
    <property type="taxonomic scope" value="Eukaryota"/>
</dbReference>
<dbReference type="GeneTree" id="ENSGT00950000183066"/>
<dbReference type="HOGENOM" id="CLU_015533_2_1_1"/>
<dbReference type="InParanoid" id="Q76MZ3"/>
<dbReference type="OMA" id="NTLCMTW"/>
<dbReference type="OrthoDB" id="340346at2759"/>
<dbReference type="PhylomeDB" id="Q76MZ3"/>
<dbReference type="TreeFam" id="TF105552"/>
<dbReference type="Reactome" id="R-MMU-113501">
    <property type="pathway name" value="Inhibition of replication initiation of damaged DNA by RB1/E2F1"/>
</dbReference>
<dbReference type="Reactome" id="R-MMU-1295596">
    <property type="pathway name" value="Spry regulation of FGF signaling"/>
</dbReference>
<dbReference type="Reactome" id="R-MMU-141444">
    <property type="pathway name" value="Amplification of signal from unattached kinetochores via a MAD2 inhibitory signal"/>
</dbReference>
<dbReference type="Reactome" id="R-MMU-180024">
    <property type="pathway name" value="DARPP-32 events"/>
</dbReference>
<dbReference type="Reactome" id="R-MMU-195253">
    <property type="pathway name" value="Degradation of beta-catenin by the destruction complex"/>
</dbReference>
<dbReference type="Reactome" id="R-MMU-196299">
    <property type="pathway name" value="Beta-catenin phosphorylation cascade"/>
</dbReference>
<dbReference type="Reactome" id="R-MMU-198753">
    <property type="pathway name" value="ERK/MAPK targets"/>
</dbReference>
<dbReference type="Reactome" id="R-MMU-202670">
    <property type="pathway name" value="ERKs are inactivated"/>
</dbReference>
<dbReference type="Reactome" id="R-MMU-2467813">
    <property type="pathway name" value="Separation of Sister Chromatids"/>
</dbReference>
<dbReference type="Reactome" id="R-MMU-2500257">
    <property type="pathway name" value="Resolution of Sister Chromatid Cohesion"/>
</dbReference>
<dbReference type="Reactome" id="R-MMU-2565942">
    <property type="pathway name" value="Regulation of PLK1 Activity at G2/M Transition"/>
</dbReference>
<dbReference type="Reactome" id="R-MMU-2995383">
    <property type="pathway name" value="Initiation of Nuclear Envelope (NE) Reformation"/>
</dbReference>
<dbReference type="Reactome" id="R-MMU-380259">
    <property type="pathway name" value="Loss of Nlp from mitotic centrosomes"/>
</dbReference>
<dbReference type="Reactome" id="R-MMU-380270">
    <property type="pathway name" value="Recruitment of mitotic centrosome proteins and complexes"/>
</dbReference>
<dbReference type="Reactome" id="R-MMU-380284">
    <property type="pathway name" value="Loss of proteins required for interphase microtubule organization from the centrosome"/>
</dbReference>
<dbReference type="Reactome" id="R-MMU-380320">
    <property type="pathway name" value="Recruitment of NuMA to mitotic centrosomes"/>
</dbReference>
<dbReference type="Reactome" id="R-MMU-389356">
    <property type="pathway name" value="Co-stimulation by CD28"/>
</dbReference>
<dbReference type="Reactome" id="R-MMU-389513">
    <property type="pathway name" value="Co-inhibition by CTLA4"/>
</dbReference>
<dbReference type="Reactome" id="R-MMU-432142">
    <property type="pathway name" value="Platelet sensitization by LDL"/>
</dbReference>
<dbReference type="Reactome" id="R-MMU-4641262">
    <property type="pathway name" value="Disassembly of the destruction complex and recruitment of AXIN to the membrane"/>
</dbReference>
<dbReference type="Reactome" id="R-MMU-5620912">
    <property type="pathway name" value="Anchoring of the basal body to the plasma membrane"/>
</dbReference>
<dbReference type="Reactome" id="R-MMU-5663220">
    <property type="pathway name" value="RHO GTPases Activate Formins"/>
</dbReference>
<dbReference type="Reactome" id="R-MMU-5673000">
    <property type="pathway name" value="RAF activation"/>
</dbReference>
<dbReference type="Reactome" id="R-MMU-5675221">
    <property type="pathway name" value="Negative regulation of MAPK pathway"/>
</dbReference>
<dbReference type="Reactome" id="R-MMU-6804757">
    <property type="pathway name" value="Regulation of TP53 Degradation"/>
</dbReference>
<dbReference type="Reactome" id="R-MMU-6811558">
    <property type="pathway name" value="PI5P, PP2A and IER3 Regulate PI3K/AKT Signaling"/>
</dbReference>
<dbReference type="Reactome" id="R-MMU-68877">
    <property type="pathway name" value="Mitotic Prometaphase"/>
</dbReference>
<dbReference type="Reactome" id="R-MMU-69231">
    <property type="pathway name" value="Cyclin D associated events in G1"/>
</dbReference>
<dbReference type="Reactome" id="R-MMU-69273">
    <property type="pathway name" value="Cyclin A/B1/B2 associated events during G2/M transition"/>
</dbReference>
<dbReference type="Reactome" id="R-MMU-8854518">
    <property type="pathway name" value="AURKA Activation by TPX2"/>
</dbReference>
<dbReference type="Reactome" id="R-MMU-9648025">
    <property type="pathway name" value="EML4 and NUDC in mitotic spindle formation"/>
</dbReference>
<dbReference type="Reactome" id="R-MMU-975957">
    <property type="pathway name" value="Nonsense Mediated Decay (NMD) enhanced by the Exon Junction Complex (EJC)"/>
</dbReference>
<dbReference type="Reactome" id="R-MMU-9833482">
    <property type="pathway name" value="PKR-mediated signaling"/>
</dbReference>
<dbReference type="Reactome" id="R-MMU-9860927">
    <property type="pathway name" value="Turbulent (oscillatory, disturbed) flow shear stress activates signaling by PIEZO1 and integrins in endothelial cells"/>
</dbReference>
<dbReference type="BioGRID-ORCS" id="51792">
    <property type="hits" value="27 hits in 85 CRISPR screens"/>
</dbReference>
<dbReference type="CD-CODE" id="CE726F99">
    <property type="entry name" value="Postsynaptic density"/>
</dbReference>
<dbReference type="ChiTaRS" id="Ppp2r1a">
    <property type="organism name" value="mouse"/>
</dbReference>
<dbReference type="EvolutionaryTrace" id="Q76MZ3"/>
<dbReference type="PRO" id="PR:Q76MZ3"/>
<dbReference type="Proteomes" id="UP000000589">
    <property type="component" value="Chromosome 17"/>
</dbReference>
<dbReference type="RNAct" id="Q76MZ3">
    <property type="molecule type" value="protein"/>
</dbReference>
<dbReference type="Bgee" id="ENSMUSG00000007564">
    <property type="expression patterns" value="Expressed in vestibular membrane of cochlear duct and 274 other cell types or tissues"/>
</dbReference>
<dbReference type="ExpressionAtlas" id="Q76MZ3">
    <property type="expression patterns" value="baseline and differential"/>
</dbReference>
<dbReference type="GO" id="GO:0000785">
    <property type="term" value="C:chromatin"/>
    <property type="evidence" value="ECO:0000250"/>
    <property type="project" value="UniProtKB"/>
</dbReference>
<dbReference type="GO" id="GO:0000775">
    <property type="term" value="C:chromosome, centromeric region"/>
    <property type="evidence" value="ECO:0000250"/>
    <property type="project" value="UniProtKB"/>
</dbReference>
<dbReference type="GO" id="GO:0005829">
    <property type="term" value="C:cytosol"/>
    <property type="evidence" value="ECO:0000314"/>
    <property type="project" value="MGI"/>
</dbReference>
<dbReference type="GO" id="GO:0030425">
    <property type="term" value="C:dendrite"/>
    <property type="evidence" value="ECO:0007669"/>
    <property type="project" value="UniProtKB-SubCell"/>
</dbReference>
<dbReference type="GO" id="GO:0090443">
    <property type="term" value="C:FAR/SIN/STRIPAK complex"/>
    <property type="evidence" value="ECO:0000250"/>
    <property type="project" value="UniProtKB"/>
</dbReference>
<dbReference type="GO" id="GO:0098978">
    <property type="term" value="C:glutamatergic synapse"/>
    <property type="evidence" value="ECO:0000314"/>
    <property type="project" value="SynGO"/>
</dbReference>
<dbReference type="GO" id="GO:0160232">
    <property type="term" value="C:INTAC complex"/>
    <property type="evidence" value="ECO:0007669"/>
    <property type="project" value="Ensembl"/>
</dbReference>
<dbReference type="GO" id="GO:0016328">
    <property type="term" value="C:lateral plasma membrane"/>
    <property type="evidence" value="ECO:0007669"/>
    <property type="project" value="UniProtKB-SubCell"/>
</dbReference>
<dbReference type="GO" id="GO:0043025">
    <property type="term" value="C:neuronal cell body"/>
    <property type="evidence" value="ECO:0007669"/>
    <property type="project" value="Ensembl"/>
</dbReference>
<dbReference type="GO" id="GO:0005634">
    <property type="term" value="C:nucleus"/>
    <property type="evidence" value="ECO:0000250"/>
    <property type="project" value="UniProtKB"/>
</dbReference>
<dbReference type="GO" id="GO:0000159">
    <property type="term" value="C:protein phosphatase type 2A complex"/>
    <property type="evidence" value="ECO:0000314"/>
    <property type="project" value="MGI"/>
</dbReference>
<dbReference type="GO" id="GO:0045202">
    <property type="term" value="C:synapse"/>
    <property type="evidence" value="ECO:0000314"/>
    <property type="project" value="SynGO"/>
</dbReference>
<dbReference type="GO" id="GO:1990405">
    <property type="term" value="F:protein antigen binding"/>
    <property type="evidence" value="ECO:0007669"/>
    <property type="project" value="Ensembl"/>
</dbReference>
<dbReference type="GO" id="GO:0046982">
    <property type="term" value="F:protein heterodimerization activity"/>
    <property type="evidence" value="ECO:0007669"/>
    <property type="project" value="Ensembl"/>
</dbReference>
<dbReference type="GO" id="GO:0019888">
    <property type="term" value="F:protein phosphatase regulator activity"/>
    <property type="evidence" value="ECO:0000250"/>
    <property type="project" value="UniProtKB"/>
</dbReference>
<dbReference type="GO" id="GO:0004722">
    <property type="term" value="F:protein serine/threonine phosphatase activity"/>
    <property type="evidence" value="ECO:0000314"/>
    <property type="project" value="MGI"/>
</dbReference>
<dbReference type="GO" id="GO:0007059">
    <property type="term" value="P:chromosome segregation"/>
    <property type="evidence" value="ECO:0000250"/>
    <property type="project" value="UniProtKB"/>
</dbReference>
<dbReference type="GO" id="GO:0007143">
    <property type="term" value="P:female meiotic nuclear division"/>
    <property type="evidence" value="ECO:0000315"/>
    <property type="project" value="MGI"/>
</dbReference>
<dbReference type="GO" id="GO:0051754">
    <property type="term" value="P:meiotic sister chromatid cohesion, centromeric"/>
    <property type="evidence" value="ECO:0000315"/>
    <property type="project" value="MGI"/>
</dbReference>
<dbReference type="GO" id="GO:0051232">
    <property type="term" value="P:meiotic spindle elongation"/>
    <property type="evidence" value="ECO:0000315"/>
    <property type="project" value="MGI"/>
</dbReference>
<dbReference type="GO" id="GO:0051306">
    <property type="term" value="P:mitotic sister chromatid separation"/>
    <property type="evidence" value="ECO:0000315"/>
    <property type="project" value="MGI"/>
</dbReference>
<dbReference type="GO" id="GO:0035331">
    <property type="term" value="P:negative regulation of hippo signaling"/>
    <property type="evidence" value="ECO:0000250"/>
    <property type="project" value="UniProtKB"/>
</dbReference>
<dbReference type="GO" id="GO:0051898">
    <property type="term" value="P:negative regulation of phosphatidylinositol 3-kinase/protein kinase B signal transduction"/>
    <property type="evidence" value="ECO:0000315"/>
    <property type="project" value="UniProtKB"/>
</dbReference>
<dbReference type="GO" id="GO:2001241">
    <property type="term" value="P:positive regulation of extrinsic apoptotic signaling pathway in absence of ligand"/>
    <property type="evidence" value="ECO:0000315"/>
    <property type="project" value="MGI"/>
</dbReference>
<dbReference type="GO" id="GO:1903538">
    <property type="term" value="P:regulation of meiotic cell cycle process involved in oocyte maturation"/>
    <property type="evidence" value="ECO:0000315"/>
    <property type="project" value="MGI"/>
</dbReference>
<dbReference type="GO" id="GO:0160240">
    <property type="term" value="P:RNA polymerase II transcription initiation surveillance"/>
    <property type="evidence" value="ECO:0007669"/>
    <property type="project" value="Ensembl"/>
</dbReference>
<dbReference type="GO" id="GO:0043029">
    <property type="term" value="P:T cell homeostasis"/>
    <property type="evidence" value="ECO:0000315"/>
    <property type="project" value="UniProtKB"/>
</dbReference>
<dbReference type="FunFam" id="1.25.10.10:FF:000011">
    <property type="entry name" value="Serine/threonine-protein phosphatase 2A regulatory subunit A alpha isoform"/>
    <property type="match status" value="1"/>
</dbReference>
<dbReference type="Gene3D" id="1.25.10.10">
    <property type="entry name" value="Leucine-rich Repeat Variant"/>
    <property type="match status" value="1"/>
</dbReference>
<dbReference type="InterPro" id="IPR011989">
    <property type="entry name" value="ARM-like"/>
</dbReference>
<dbReference type="InterPro" id="IPR016024">
    <property type="entry name" value="ARM-type_fold"/>
</dbReference>
<dbReference type="InterPro" id="IPR000357">
    <property type="entry name" value="HEAT"/>
</dbReference>
<dbReference type="InterPro" id="IPR021133">
    <property type="entry name" value="HEAT_type_2"/>
</dbReference>
<dbReference type="InterPro" id="IPR054573">
    <property type="entry name" value="PP2A/SF3B1-like_HEAT"/>
</dbReference>
<dbReference type="InterPro" id="IPR051023">
    <property type="entry name" value="PP2A_Regulatory_Subunit_A"/>
</dbReference>
<dbReference type="PANTHER" id="PTHR10648">
    <property type="entry name" value="SERINE/THREONINE-PROTEIN PHOSPHATASE PP2A 65 KDA REGULATORY SUBUNIT"/>
    <property type="match status" value="1"/>
</dbReference>
<dbReference type="PANTHER" id="PTHR10648:SF2">
    <property type="entry name" value="SERINE_THREONINE-PROTEIN PHOSPHATASE 2A 65 KDA REGULATORY SUBUNIT A ALPHA ISOFORM"/>
    <property type="match status" value="1"/>
</dbReference>
<dbReference type="Pfam" id="PF02985">
    <property type="entry name" value="HEAT"/>
    <property type="match status" value="4"/>
</dbReference>
<dbReference type="Pfam" id="PF13646">
    <property type="entry name" value="HEAT_2"/>
    <property type="match status" value="1"/>
</dbReference>
<dbReference type="Pfam" id="PF22646">
    <property type="entry name" value="PPP2R1A-like_HEAT"/>
    <property type="match status" value="1"/>
</dbReference>
<dbReference type="SUPFAM" id="SSF48371">
    <property type="entry name" value="ARM repeat"/>
    <property type="match status" value="1"/>
</dbReference>
<dbReference type="PROSITE" id="PS50077">
    <property type="entry name" value="HEAT_REPEAT"/>
    <property type="match status" value="11"/>
</dbReference>
<protein>
    <recommendedName>
        <fullName>Serine/threonine-protein phosphatase 2A 65 kDa regulatory subunit A alpha isoform</fullName>
        <shortName evidence="1">PP2Aa</shortName>
    </recommendedName>
    <alternativeName>
        <fullName>PP2A subunit A isoform PR65-alpha</fullName>
    </alternativeName>
    <alternativeName>
        <fullName>PP2A subunit A isoform R1-alpha</fullName>
    </alternativeName>
</protein>
<reference key="1">
    <citation type="journal article" date="1999" name="FEBS Lett.">
        <title>Alpha4 protein as a common regulator of type 2A-related serine/threonine protein phosphatases.</title>
        <authorList>
            <person name="Nanahoshi M."/>
            <person name="Tsujishita Y."/>
            <person name="Tokunaga C."/>
            <person name="Inui S."/>
            <person name="Sakaguchi N."/>
            <person name="Hara K."/>
            <person name="Yonezawa K."/>
        </authorList>
    </citation>
    <scope>NUCLEOTIDE SEQUENCE [MRNA]</scope>
    <scope>FUNCTION</scope>
</reference>
<reference key="2">
    <citation type="journal article" date="2005" name="Science">
        <title>The transcriptional landscape of the mammalian genome.</title>
        <authorList>
            <person name="Carninci P."/>
            <person name="Kasukawa T."/>
            <person name="Katayama S."/>
            <person name="Gough J."/>
            <person name="Frith M.C."/>
            <person name="Maeda N."/>
            <person name="Oyama R."/>
            <person name="Ravasi T."/>
            <person name="Lenhard B."/>
            <person name="Wells C."/>
            <person name="Kodzius R."/>
            <person name="Shimokawa K."/>
            <person name="Bajic V.B."/>
            <person name="Brenner S.E."/>
            <person name="Batalov S."/>
            <person name="Forrest A.R."/>
            <person name="Zavolan M."/>
            <person name="Davis M.J."/>
            <person name="Wilming L.G."/>
            <person name="Aidinis V."/>
            <person name="Allen J.E."/>
            <person name="Ambesi-Impiombato A."/>
            <person name="Apweiler R."/>
            <person name="Aturaliya R.N."/>
            <person name="Bailey T.L."/>
            <person name="Bansal M."/>
            <person name="Baxter L."/>
            <person name="Beisel K.W."/>
            <person name="Bersano T."/>
            <person name="Bono H."/>
            <person name="Chalk A.M."/>
            <person name="Chiu K.P."/>
            <person name="Choudhary V."/>
            <person name="Christoffels A."/>
            <person name="Clutterbuck D.R."/>
            <person name="Crowe M.L."/>
            <person name="Dalla E."/>
            <person name="Dalrymple B.P."/>
            <person name="de Bono B."/>
            <person name="Della Gatta G."/>
            <person name="di Bernardo D."/>
            <person name="Down T."/>
            <person name="Engstrom P."/>
            <person name="Fagiolini M."/>
            <person name="Faulkner G."/>
            <person name="Fletcher C.F."/>
            <person name="Fukushima T."/>
            <person name="Furuno M."/>
            <person name="Futaki S."/>
            <person name="Gariboldi M."/>
            <person name="Georgii-Hemming P."/>
            <person name="Gingeras T.R."/>
            <person name="Gojobori T."/>
            <person name="Green R.E."/>
            <person name="Gustincich S."/>
            <person name="Harbers M."/>
            <person name="Hayashi Y."/>
            <person name="Hensch T.K."/>
            <person name="Hirokawa N."/>
            <person name="Hill D."/>
            <person name="Huminiecki L."/>
            <person name="Iacono M."/>
            <person name="Ikeo K."/>
            <person name="Iwama A."/>
            <person name="Ishikawa T."/>
            <person name="Jakt M."/>
            <person name="Kanapin A."/>
            <person name="Katoh M."/>
            <person name="Kawasawa Y."/>
            <person name="Kelso J."/>
            <person name="Kitamura H."/>
            <person name="Kitano H."/>
            <person name="Kollias G."/>
            <person name="Krishnan S.P."/>
            <person name="Kruger A."/>
            <person name="Kummerfeld S.K."/>
            <person name="Kurochkin I.V."/>
            <person name="Lareau L.F."/>
            <person name="Lazarevic D."/>
            <person name="Lipovich L."/>
            <person name="Liu J."/>
            <person name="Liuni S."/>
            <person name="McWilliam S."/>
            <person name="Madan Babu M."/>
            <person name="Madera M."/>
            <person name="Marchionni L."/>
            <person name="Matsuda H."/>
            <person name="Matsuzawa S."/>
            <person name="Miki H."/>
            <person name="Mignone F."/>
            <person name="Miyake S."/>
            <person name="Morris K."/>
            <person name="Mottagui-Tabar S."/>
            <person name="Mulder N."/>
            <person name="Nakano N."/>
            <person name="Nakauchi H."/>
            <person name="Ng P."/>
            <person name="Nilsson R."/>
            <person name="Nishiguchi S."/>
            <person name="Nishikawa S."/>
            <person name="Nori F."/>
            <person name="Ohara O."/>
            <person name="Okazaki Y."/>
            <person name="Orlando V."/>
            <person name="Pang K.C."/>
            <person name="Pavan W.J."/>
            <person name="Pavesi G."/>
            <person name="Pesole G."/>
            <person name="Petrovsky N."/>
            <person name="Piazza S."/>
            <person name="Reed J."/>
            <person name="Reid J.F."/>
            <person name="Ring B.Z."/>
            <person name="Ringwald M."/>
            <person name="Rost B."/>
            <person name="Ruan Y."/>
            <person name="Salzberg S.L."/>
            <person name="Sandelin A."/>
            <person name="Schneider C."/>
            <person name="Schoenbach C."/>
            <person name="Sekiguchi K."/>
            <person name="Semple C.A."/>
            <person name="Seno S."/>
            <person name="Sessa L."/>
            <person name="Sheng Y."/>
            <person name="Shibata Y."/>
            <person name="Shimada H."/>
            <person name="Shimada K."/>
            <person name="Silva D."/>
            <person name="Sinclair B."/>
            <person name="Sperling S."/>
            <person name="Stupka E."/>
            <person name="Sugiura K."/>
            <person name="Sultana R."/>
            <person name="Takenaka Y."/>
            <person name="Taki K."/>
            <person name="Tammoja K."/>
            <person name="Tan S.L."/>
            <person name="Tang S."/>
            <person name="Taylor M.S."/>
            <person name="Tegner J."/>
            <person name="Teichmann S.A."/>
            <person name="Ueda H.R."/>
            <person name="van Nimwegen E."/>
            <person name="Verardo R."/>
            <person name="Wei C.L."/>
            <person name="Yagi K."/>
            <person name="Yamanishi H."/>
            <person name="Zabarovsky E."/>
            <person name="Zhu S."/>
            <person name="Zimmer A."/>
            <person name="Hide W."/>
            <person name="Bult C."/>
            <person name="Grimmond S.M."/>
            <person name="Teasdale R.D."/>
            <person name="Liu E.T."/>
            <person name="Brusic V."/>
            <person name="Quackenbush J."/>
            <person name="Wahlestedt C."/>
            <person name="Mattick J.S."/>
            <person name="Hume D.A."/>
            <person name="Kai C."/>
            <person name="Sasaki D."/>
            <person name="Tomaru Y."/>
            <person name="Fukuda S."/>
            <person name="Kanamori-Katayama M."/>
            <person name="Suzuki M."/>
            <person name="Aoki J."/>
            <person name="Arakawa T."/>
            <person name="Iida J."/>
            <person name="Imamura K."/>
            <person name="Itoh M."/>
            <person name="Kato T."/>
            <person name="Kawaji H."/>
            <person name="Kawagashira N."/>
            <person name="Kawashima T."/>
            <person name="Kojima M."/>
            <person name="Kondo S."/>
            <person name="Konno H."/>
            <person name="Nakano K."/>
            <person name="Ninomiya N."/>
            <person name="Nishio T."/>
            <person name="Okada M."/>
            <person name="Plessy C."/>
            <person name="Shibata K."/>
            <person name="Shiraki T."/>
            <person name="Suzuki S."/>
            <person name="Tagami M."/>
            <person name="Waki K."/>
            <person name="Watahiki A."/>
            <person name="Okamura-Oho Y."/>
            <person name="Suzuki H."/>
            <person name="Kawai J."/>
            <person name="Hayashizaki Y."/>
        </authorList>
    </citation>
    <scope>NUCLEOTIDE SEQUENCE [LARGE SCALE MRNA]</scope>
    <source>
        <strain>C57BL/6J</strain>
        <tissue>Medulla oblongata</tissue>
        <tissue>Oviduct</tissue>
    </source>
</reference>
<reference key="3">
    <citation type="journal article" date="2004" name="Genome Res.">
        <title>The status, quality, and expansion of the NIH full-length cDNA project: the Mammalian Gene Collection (MGC).</title>
        <authorList>
            <consortium name="The MGC Project Team"/>
        </authorList>
    </citation>
    <scope>NUCLEOTIDE SEQUENCE [LARGE SCALE MRNA]</scope>
    <source>
        <strain>FVB/N</strain>
        <tissue>Mammary tumor</tissue>
    </source>
</reference>
<reference key="4">
    <citation type="journal article" date="2006" name="Mol. Pharmacol.">
        <title>A direct interaction between the N terminus of adenylyl cyclase AC8 and the catalytic subunit of protein phosphatase 2A.</title>
        <authorList>
            <person name="Crossthwaite A.J."/>
            <person name="Ciruela A."/>
            <person name="Rayner T.F."/>
            <person name="Cooper D.M."/>
        </authorList>
    </citation>
    <scope>INTERACTION WITH ADCY8</scope>
</reference>
<reference key="5">
    <citation type="journal article" date="2010" name="Cell">
        <title>A tissue-specific atlas of mouse protein phosphorylation and expression.</title>
        <authorList>
            <person name="Huttlin E.L."/>
            <person name="Jedrychowski M.P."/>
            <person name="Elias J.E."/>
            <person name="Goswami T."/>
            <person name="Rad R."/>
            <person name="Beausoleil S.A."/>
            <person name="Villen J."/>
            <person name="Haas W."/>
            <person name="Sowa M.E."/>
            <person name="Gygi S.P."/>
        </authorList>
    </citation>
    <scope>IDENTIFICATION BY MASS SPECTROMETRY [LARGE SCALE ANALYSIS]</scope>
    <source>
        <tissue>Brain</tissue>
        <tissue>Brown adipose tissue</tissue>
        <tissue>Heart</tissue>
        <tissue>Kidney</tissue>
        <tissue>Liver</tissue>
        <tissue>Lung</tissue>
        <tissue>Pancreas</tissue>
        <tissue>Spleen</tissue>
        <tissue>Testis</tissue>
    </source>
</reference>
<reference key="6">
    <citation type="journal article" date="2012" name="Biochem. J.">
        <title>The B55alpha-containing PP2A holoenzyme dephosphorylates FOXO1 in islet beta-cells under oxidative stress.</title>
        <authorList>
            <person name="Yan L."/>
            <person name="Guo S."/>
            <person name="Brault M."/>
            <person name="Harmon J."/>
            <person name="Robertson R.P."/>
            <person name="Hamid R."/>
            <person name="Stein R."/>
            <person name="Yang E."/>
        </authorList>
    </citation>
    <scope>IDENTIFICATION BY MASS SPECTROMETRY</scope>
    <scope>INTERACTION WITH FOXO1</scope>
</reference>
<reference key="7">
    <citation type="journal article" date="2013" name="Mol. Cell">
        <title>SIRT5-mediated lysine desuccinylation impacts diverse metabolic pathways.</title>
        <authorList>
            <person name="Park J."/>
            <person name="Chen Y."/>
            <person name="Tishkoff D.X."/>
            <person name="Peng C."/>
            <person name="Tan M."/>
            <person name="Dai L."/>
            <person name="Xie Z."/>
            <person name="Zhang Y."/>
            <person name="Zwaans B.M."/>
            <person name="Skinner M.E."/>
            <person name="Lombard D.B."/>
            <person name="Zhao Y."/>
        </authorList>
    </citation>
    <scope>ACETYLATION [LARGE SCALE ANALYSIS] AT LYS-280</scope>
    <scope>IDENTIFICATION BY MASS SPECTROMETRY [LARGE SCALE ANALYSIS]</scope>
    <source>
        <tissue>Embryonic fibroblast</tissue>
    </source>
</reference>
<reference key="8">
    <citation type="journal article" date="2016" name="Nat. Immunol.">
        <title>Phosphatase PP2A is requisite for the function of regulatory T cells.</title>
        <authorList>
            <person name="Apostolidis S.A."/>
            <person name="Rodriguez-Rodriguez N."/>
            <person name="Suarez-Fueyo A."/>
            <person name="Dioufa N."/>
            <person name="Ozcan E."/>
            <person name="Crispin J.C."/>
            <person name="Tsokos M.G."/>
            <person name="Tsokos G.C."/>
        </authorList>
    </citation>
    <scope>FUNCTION</scope>
</reference>
<reference key="9">
    <citation type="journal article" date="2018" name="IScience">
        <title>Mitogenic Signals Stimulate the CREB Coactivator CRTC3 through PP2A Recruitment.</title>
        <authorList>
            <person name="Sonntag T."/>
            <person name="Ostojic J."/>
            <person name="Vaughan J.M."/>
            <person name="Moresco J.J."/>
            <person name="Yoon Y.S."/>
            <person name="Yates J.R. III"/>
            <person name="Montminy M."/>
        </authorList>
    </citation>
    <scope>INTERACTION WITH CRTC3</scope>
</reference>
<reference key="10">
    <citation type="journal article" date="2021" name="Nature">
        <title>AIM2 in regulatory T cells restrains autoimmune diseases.</title>
        <authorList>
            <person name="Chou W.C."/>
            <person name="Guo Z."/>
            <person name="Guo H."/>
            <person name="Chen L."/>
            <person name="Zhang G."/>
            <person name="Liang K."/>
            <person name="Xie L."/>
            <person name="Tan X."/>
            <person name="Gibson S.A."/>
            <person name="Rampanelli E."/>
            <person name="Wang Y."/>
            <person name="Montgomery S.A."/>
            <person name="Brickey W.J."/>
            <person name="Deng M."/>
            <person name="Freeman L."/>
            <person name="Zhang S."/>
            <person name="Su M.A."/>
            <person name="Chen X."/>
            <person name="Wan Y.Y."/>
            <person name="Ting J.P."/>
        </authorList>
    </citation>
    <scope>FUNCTION</scope>
</reference>
<name>2AAA_MOUSE</name>